<reference key="1">
    <citation type="journal article" date="1998" name="J. Virol.">
        <title>The genome sequence of herpes simplex virus type 2.</title>
        <authorList>
            <person name="Dolan A."/>
            <person name="Jamieson F.E."/>
            <person name="Cunningham C."/>
            <person name="Barnett B.C."/>
            <person name="McGeoch D.J."/>
        </authorList>
    </citation>
    <scope>NUCLEOTIDE SEQUENCE [LARGE SCALE GENOMIC DNA]</scope>
</reference>
<gene>
    <name type="ORF">UL47</name>
</gene>
<organism>
    <name type="scientific">Human herpesvirus 2 (strain HG52)</name>
    <name type="common">HHV-2</name>
    <name type="synonym">Human herpes simplex virus 2</name>
    <dbReference type="NCBI Taxonomy" id="10315"/>
    <lineage>
        <taxon>Viruses</taxon>
        <taxon>Duplodnaviria</taxon>
        <taxon>Heunggongvirae</taxon>
        <taxon>Peploviricota</taxon>
        <taxon>Herviviricetes</taxon>
        <taxon>Herpesvirales</taxon>
        <taxon>Orthoherpesviridae</taxon>
        <taxon>Alphaherpesvirinae</taxon>
        <taxon>Simplexvirus</taxon>
        <taxon>Simplexvirus humanalpha2</taxon>
        <taxon>Human herpesvirus 2</taxon>
    </lineage>
</organism>
<accession>P89467</accession>
<keyword id="KW-1035">Host cytoplasm</keyword>
<keyword id="KW-1048">Host nucleus</keyword>
<keyword id="KW-0426">Late protein</keyword>
<keyword id="KW-1185">Reference proteome</keyword>
<keyword id="KW-0694">RNA-binding</keyword>
<keyword id="KW-0804">Transcription</keyword>
<keyword id="KW-0805">Transcription regulation</keyword>
<keyword id="KW-0946">Virion</keyword>
<keyword id="KW-0920">Virion tegument</keyword>
<protein>
    <recommendedName>
        <fullName>Tegument protein UL47</fullName>
    </recommendedName>
    <alternativeName>
        <fullName>82/81 kDa tegument protein</fullName>
    </alternativeName>
    <alternativeName>
        <fullName>VMW82/81</fullName>
    </alternativeName>
    <alternativeName>
        <fullName>VP13/14</fullName>
    </alternativeName>
</protein>
<dbReference type="EMBL" id="Z86099">
    <property type="protein sequence ID" value="CAB06733.1"/>
    <property type="molecule type" value="Genomic_DNA"/>
</dbReference>
<dbReference type="PIR" id="PS0359">
    <property type="entry name" value="PS0359"/>
</dbReference>
<dbReference type="Proteomes" id="UP000001874">
    <property type="component" value="Segment"/>
</dbReference>
<dbReference type="GO" id="GO:0030430">
    <property type="term" value="C:host cell cytoplasm"/>
    <property type="evidence" value="ECO:0007669"/>
    <property type="project" value="UniProtKB-SubCell"/>
</dbReference>
<dbReference type="GO" id="GO:0042025">
    <property type="term" value="C:host cell nucleus"/>
    <property type="evidence" value="ECO:0007669"/>
    <property type="project" value="UniProtKB-SubCell"/>
</dbReference>
<dbReference type="GO" id="GO:0019033">
    <property type="term" value="C:viral tegument"/>
    <property type="evidence" value="ECO:0007669"/>
    <property type="project" value="UniProtKB-SubCell"/>
</dbReference>
<dbReference type="GO" id="GO:0003723">
    <property type="term" value="F:RNA binding"/>
    <property type="evidence" value="ECO:0007669"/>
    <property type="project" value="UniProtKB-KW"/>
</dbReference>
<dbReference type="GO" id="GO:0006355">
    <property type="term" value="P:regulation of DNA-templated transcription"/>
    <property type="evidence" value="ECO:0007669"/>
    <property type="project" value="InterPro"/>
</dbReference>
<dbReference type="InterPro" id="IPR005029">
    <property type="entry name" value="Herpes_UL47"/>
</dbReference>
<dbReference type="Pfam" id="PF03362">
    <property type="entry name" value="Herpes_UL47"/>
    <property type="match status" value="1"/>
</dbReference>
<organismHost>
    <name type="scientific">Homo sapiens</name>
    <name type="common">Human</name>
    <dbReference type="NCBI Taxonomy" id="9606"/>
</organismHost>
<evidence type="ECO:0000250" key="1"/>
<evidence type="ECO:0000250" key="2">
    <source>
        <dbReference type="UniProtKB" id="P10231"/>
    </source>
</evidence>
<evidence type="ECO:0000256" key="3">
    <source>
        <dbReference type="SAM" id="MobiDB-lite"/>
    </source>
</evidence>
<evidence type="ECO:0000305" key="4"/>
<comment type="function">
    <text evidence="2">Tegument protein that can bind to various RNA transcripts. Plays a role in the attenuation of selective viral and cellular mRNA degradation by modulating the activity of host shutoff RNase UL41/VHS. Also plays a role in the primary envelopment of virions in the perinuclear space, probably by interacting with two nuclear egress proteins UL31 and UL34.</text>
</comment>
<comment type="subunit">
    <text evidence="2">Interacts with US3 kinase. Interacts with UL31 and UL34; these interactions seem important for efficient virion nuclear egress. Interacts with UL41/VHS.</text>
</comment>
<comment type="subcellular location">
    <subcellularLocation>
        <location evidence="2">Virion tegument</location>
    </subcellularLocation>
    <subcellularLocation>
        <location evidence="2">Host nucleus</location>
    </subcellularLocation>
    <subcellularLocation>
        <location evidence="2">Host cytoplasm</location>
    </subcellularLocation>
    <text evidence="2">Major tegument protein of the virion. Undergoes nucleocytoplasmic shuttling during infection. Localizes to the major sites of transcription in the infected cell nucleus.</text>
</comment>
<comment type="domain">
    <text evidence="2">The nuclear export signal is CRM1-dependent.</text>
</comment>
<comment type="PTM">
    <text evidence="2">Phosphorylated by US3. This phosphorylation is required for proper nuclear localization.</text>
</comment>
<comment type="miscellaneous">
    <text evidence="1">Expressed in late in the infection.</text>
</comment>
<comment type="similarity">
    <text evidence="4">Belongs to the alphaherpesvirinae HHV-1 UL47 family.</text>
</comment>
<name>TEG5_HHV2H</name>
<sequence length="696" mass="73600">MSVRGHAVRRRRASTRSHAPSAHRADSPVEDEPEGGGVGLMGYLRAVFNVDDDSEVEAAGEMASEEPPPRRRREARGHPGSRRASEARAAAPPRRASFPRPRSVTARSQSVRGRRDSAITRAPRGGYLGPMDPRDVLGRVGGSRVVPSPLFLDELNYEEDDYPAAVAHDDGPGARPSATVEILAGRVSGPELQAAFPLDRLTPRVAAWDESVRSALALGHPAGFYPCPDSAFGLSRVGVMHFASPADPKVFFRQTLQQGEALAWYVTGDAILDLTDRRAKTSPSRAMGFLVDAIVRVAINGWVCGTRLHTEGRGSELDDRAAELRRQFASLTALRPVGAAAVPLLSAGGAAPPHPGPDAAVFRSSLGSLLYWPGVRALLGRDCRVAARYAGRMTYIATGALLARFNPGAVKCVLPREAAFAGRVLDVLAVLAEQTVQWLSVVVGARLHPHSAHPAFADVEQEALFRALPLGSPGVVAAEHEALGDTAARRLLATSGLNAVLGAAVYALHTALATVTLKYALACGDARRRRDDAAAARAVLATGLILQRLLGLADTVVACVALAAFDGGSTAPEVGTYTPLRYACVLRATQPLYARTTPAKFWADVRAAAEHVDLRPASSAPRAPVSGTADPAFLLEDLAAFPPAPLNSESVLGPRVRVVDIMAQFRKLLMGDEETAALRAHVSGRRATGLGGPPRP</sequence>
<proteinExistence type="inferred from homology"/>
<feature type="chain" id="PRO_0000385493" description="Tegument protein UL47">
    <location>
        <begin position="1"/>
        <end position="696"/>
    </location>
</feature>
<feature type="region of interest" description="Disordered" evidence="3">
    <location>
        <begin position="1"/>
        <end position="39"/>
    </location>
</feature>
<feature type="region of interest" description="Disordered" evidence="3">
    <location>
        <begin position="54"/>
        <end position="130"/>
    </location>
</feature>
<feature type="region of interest" description="RNA-binding" evidence="1">
    <location>
        <begin position="57"/>
        <end position="84"/>
    </location>
</feature>
<feature type="short sequence motif" description="Nuclear localization signal" evidence="1">
    <location>
        <begin position="70"/>
        <end position="84"/>
    </location>
</feature>
<feature type="short sequence motif" description="Nuclear export signal" evidence="1">
    <location>
        <begin position="650"/>
        <end position="673"/>
    </location>
</feature>
<feature type="compositionally biased region" description="Basic residues" evidence="3">
    <location>
        <begin position="1"/>
        <end position="15"/>
    </location>
</feature>
<feature type="compositionally biased region" description="Basic residues" evidence="3">
    <location>
        <begin position="70"/>
        <end position="81"/>
    </location>
</feature>
<feature type="compositionally biased region" description="Low complexity" evidence="3">
    <location>
        <begin position="87"/>
        <end position="103"/>
    </location>
</feature>